<organism>
    <name type="scientific">Homo sapiens</name>
    <name type="common">Human</name>
    <dbReference type="NCBI Taxonomy" id="9606"/>
    <lineage>
        <taxon>Eukaryota</taxon>
        <taxon>Metazoa</taxon>
        <taxon>Chordata</taxon>
        <taxon>Craniata</taxon>
        <taxon>Vertebrata</taxon>
        <taxon>Euteleostomi</taxon>
        <taxon>Mammalia</taxon>
        <taxon>Eutheria</taxon>
        <taxon>Euarchontoglires</taxon>
        <taxon>Primates</taxon>
        <taxon>Haplorrhini</taxon>
        <taxon>Catarrhini</taxon>
        <taxon>Hominidae</taxon>
        <taxon>Homo</taxon>
    </lineage>
</organism>
<accession>Q8TC05</accession>
<accession>B4DM65</accession>
<accession>E7EPQ3</accession>
<accession>O43406</accession>
<accession>Q8WTV9</accession>
<accession>Q9NR04</accession>
<gene>
    <name type="primary">MDM1</name>
</gene>
<feature type="chain" id="PRO_0000299059" description="Nuclear protein MDM1">
    <location>
        <begin position="1"/>
        <end position="714"/>
    </location>
</feature>
<feature type="region of interest" description="Disordered" evidence="2">
    <location>
        <begin position="79"/>
        <end position="152"/>
    </location>
</feature>
<feature type="region of interest" description="Disordered" evidence="2">
    <location>
        <begin position="391"/>
        <end position="571"/>
    </location>
</feature>
<feature type="region of interest" description="Disordered" evidence="2">
    <location>
        <begin position="616"/>
        <end position="637"/>
    </location>
</feature>
<feature type="short sequence motif" description="ST]-E-Y-X(3)-F motif 1; required for efficient microtubule binding and stabilization" evidence="5">
    <location>
        <begin position="9"/>
        <end position="15"/>
    </location>
</feature>
<feature type="short sequence motif" description="ST]-E-Y-X(3)-F motif 2; required for efficient microtubule binding and stabilization" evidence="5">
    <location>
        <begin position="189"/>
        <end position="195"/>
    </location>
</feature>
<feature type="short sequence motif" description="ST]-E-Y-X(3)-F motif 3; required for efficient microtubule binding and stabilization" evidence="5">
    <location>
        <begin position="232"/>
        <end position="238"/>
    </location>
</feature>
<feature type="short sequence motif" description="ST]-E-Y-X(3)-F motif 4; required for efficient microtubule binding and stabilization" evidence="5">
    <location>
        <begin position="306"/>
        <end position="312"/>
    </location>
</feature>
<feature type="compositionally biased region" description="Basic and acidic residues" evidence="2">
    <location>
        <begin position="93"/>
        <end position="111"/>
    </location>
</feature>
<feature type="compositionally biased region" description="Polar residues" evidence="2">
    <location>
        <begin position="138"/>
        <end position="147"/>
    </location>
</feature>
<feature type="compositionally biased region" description="Acidic residues" evidence="2">
    <location>
        <begin position="460"/>
        <end position="469"/>
    </location>
</feature>
<feature type="compositionally biased region" description="Basic and acidic residues" evidence="2">
    <location>
        <begin position="482"/>
        <end position="501"/>
    </location>
</feature>
<feature type="compositionally biased region" description="Pro residues" evidence="2">
    <location>
        <begin position="622"/>
        <end position="635"/>
    </location>
</feature>
<feature type="modified residue" description="Phosphoserine" evidence="12">
    <location>
        <position position="83"/>
    </location>
</feature>
<feature type="modified residue" description="Phosphoserine" evidence="1">
    <location>
        <position position="123"/>
    </location>
</feature>
<feature type="modified residue" description="Phosphoserine" evidence="1">
    <location>
        <position position="126"/>
    </location>
</feature>
<feature type="modified residue" description="Phosphoserine" evidence="11">
    <location>
        <position position="242"/>
    </location>
</feature>
<feature type="modified residue" description="Phosphoserine" evidence="11">
    <location>
        <position position="263"/>
    </location>
</feature>
<feature type="modified residue" description="Phosphoserine" evidence="1">
    <location>
        <position position="314"/>
    </location>
</feature>
<feature type="modified residue" description="Phosphoserine" evidence="1">
    <location>
        <position position="560"/>
    </location>
</feature>
<feature type="modified residue" description="Phosphoserine" evidence="11">
    <location>
        <position position="584"/>
    </location>
</feature>
<feature type="modified residue" description="Phosphoserine" evidence="11">
    <location>
        <position position="648"/>
    </location>
</feature>
<feature type="splice variant" id="VSP_027544" description="In isoform 3." evidence="8">
    <original>ITKEPSFISKRRVPYHDPQISKSL</original>
    <variation>NQGRCRTKIQHSDISSLLILVCST</variation>
    <location>
        <begin position="46"/>
        <end position="69"/>
    </location>
</feature>
<feature type="splice variant" id="VSP_027545" description="In isoform 3." evidence="8">
    <location>
        <begin position="70"/>
        <end position="714"/>
    </location>
</feature>
<feature type="splice variant" id="VSP_027546" description="In isoform 2." evidence="9">
    <original>LDRLLRKKAGLTVVPSYNALRNSEYQRQFVWKTSKETAPAFAANQVFHNKSQFVPP</original>
    <variation>VGIFTAFLFKSIEFFIGFIVISVILHFVFQNFPLLFSCLMSIRIVDNRLLTLVIVN</variation>
    <location>
        <begin position="167"/>
        <end position="222"/>
    </location>
</feature>
<feature type="splice variant" id="VSP_046400" description="In isoform 4." evidence="7">
    <location>
        <begin position="167"/>
        <end position="211"/>
    </location>
</feature>
<feature type="splice variant" id="VSP_027547" description="In isoform 2." evidence="9">
    <location>
        <begin position="223"/>
        <end position="714"/>
    </location>
</feature>
<feature type="splice variant" id="VSP_046401" description="In isoform 4." evidence="7">
    <original>Q</original>
    <variation>QGSLNAMWYAE</variation>
    <location>
        <position position="335"/>
    </location>
</feature>
<feature type="sequence variant" id="VAR_034782" description="In dbSNP:rs962976." evidence="4">
    <original>T</original>
    <variation>I</variation>
    <location>
        <position position="103"/>
    </location>
</feature>
<feature type="sequence variant" id="VAR_034783" description="In dbSNP:rs17224810.">
    <original>V</original>
    <variation>I</variation>
    <location>
        <position position="383"/>
    </location>
</feature>
<feature type="sequence variant" id="VAR_034784" description="In dbSNP:rs2306393." evidence="4 6">
    <original>R</original>
    <variation>H</variation>
    <location>
        <position position="489"/>
    </location>
</feature>
<feature type="sequence variant" id="VAR_034785" description="In dbSNP:rs2306392." evidence="4">
    <original>P</original>
    <variation>L</variation>
    <location>
        <position position="552"/>
    </location>
</feature>
<feature type="mutagenesis site" description="Loss of microtubule binding, no loss of centrosomal localization, little effect on microtubule stability, loss of ability to block centriole reduplication and defective blocking of normal centriole duplication; when associated with 189-A--A-195; 232-A--A-238 and 306-A--A-312.">
    <original>SEYQRNF</original>
    <variation>AAAQRNA</variation>
    <location>
        <begin position="9"/>
        <end position="15"/>
    </location>
</feature>
<feature type="mutagenesis site" description="Loss of microtubule binding, no loss of centrosomal localization, little effect on microtubule stability, loss of ability to block centriole reduplication and defective blocking of normal centriole duplication; when associated with 9-A--A-15; 232-A--A-238 and 306-A--A-312.">
    <original>SEYQRQF</original>
    <variation>AAAQRQA</variation>
    <location>
        <begin position="189"/>
        <end position="195"/>
    </location>
</feature>
<feature type="mutagenesis site" description="Loss of microtubule binding, no loss of centrosomal localization, little effect on microtubule stability, loss of ability to block centriole reduplication and defective blocking of normal centriole duplication; when associated with 9-A--A-15; 189-A--A-195 and 306-A--A-312.">
    <original>TEYKRNF</original>
    <variation>AAAKRNA</variation>
    <location>
        <begin position="232"/>
        <end position="238"/>
    </location>
</feature>
<feature type="mutagenesis site" description="Loss of microtubule binding, no loss of centrosomal localization, little effect on microtubule stability, loss of ability to block centriole reduplication and defective blocking of normal centriole duplication; when associated with 9-A--A-15; 189-A--A-195 and 232-A--A-238.">
    <original>SEYRAKF</original>
    <variation>AAARAKA</variation>
    <location>
        <begin position="306"/>
        <end position="312"/>
    </location>
</feature>
<feature type="sequence conflict" description="In Ref. 2; BAG59777." evidence="10" ref="2">
    <original>D</original>
    <variation>Y</variation>
    <location>
        <position position="42"/>
    </location>
</feature>
<feature type="sequence conflict" description="In Ref. 2; BAG59777." evidence="10" ref="2">
    <original>G</original>
    <variation>E</variation>
    <location>
        <position position="458"/>
    </location>
</feature>
<name>MDM1_HUMAN</name>
<evidence type="ECO:0000250" key="1">
    <source>
        <dbReference type="UniProtKB" id="Q9D067"/>
    </source>
</evidence>
<evidence type="ECO:0000256" key="2">
    <source>
        <dbReference type="SAM" id="MobiDB-lite"/>
    </source>
</evidence>
<evidence type="ECO:0000269" key="3">
    <source>
    </source>
</evidence>
<evidence type="ECO:0000269" key="4">
    <source>
    </source>
</evidence>
<evidence type="ECO:0000269" key="5">
    <source>
    </source>
</evidence>
<evidence type="ECO:0000269" key="6">
    <source ref="5"/>
</evidence>
<evidence type="ECO:0000303" key="7">
    <source>
    </source>
</evidence>
<evidence type="ECO:0000303" key="8">
    <source>
    </source>
</evidence>
<evidence type="ECO:0000303" key="9">
    <source ref="1"/>
</evidence>
<evidence type="ECO:0000305" key="10"/>
<evidence type="ECO:0007744" key="11">
    <source>
    </source>
</evidence>
<evidence type="ECO:0007744" key="12">
    <source>
    </source>
</evidence>
<proteinExistence type="evidence at protein level"/>
<comment type="function">
    <text evidence="5">Microtubule-binding protein that negatively regulates centriole duplication. Binds to and stabilizes microtubules (PubMed:26337392).</text>
</comment>
<comment type="interaction">
    <interactant intactId="EBI-3951677">
        <id>Q8TC05</id>
    </interactant>
    <interactant intactId="EBI-10961624">
        <id>Q2TAC2-2</id>
        <label>CCDC57</label>
    </interactant>
    <organismsDiffer>false</organismsDiffer>
    <experiments>3</experiments>
</comment>
<comment type="interaction">
    <interactant intactId="EBI-3951677">
        <id>Q8TC05</id>
    </interactant>
    <interactant intactId="EBI-748420">
        <id>Q9NSC5</id>
        <label>HOMER3</label>
    </interactant>
    <organismsDiffer>false</organismsDiffer>
    <experiments>3</experiments>
</comment>
<comment type="interaction">
    <interactant intactId="EBI-3951677">
        <id>Q8TC05</id>
    </interactant>
    <interactant intactId="EBI-2557132">
        <id>Q8NBT0</id>
        <label>POC1A</label>
    </interactant>
    <organismsDiffer>false</organismsDiffer>
    <experiments>2</experiments>
</comment>
<comment type="subcellular location">
    <subcellularLocation>
        <location evidence="5">Nucleus</location>
    </subcellularLocation>
    <subcellularLocation>
        <location evidence="3 5">Cytoplasm</location>
        <location evidence="3 5">Cytoskeleton</location>
        <location evidence="3 5">Microtubule organizing center</location>
        <location evidence="3 5">Centrosome</location>
    </subcellularLocation>
    <subcellularLocation>
        <location evidence="5">Cytoplasm</location>
        <location evidence="5">Cytoskeleton</location>
        <location evidence="5">Microtubule organizing center</location>
        <location evidence="5">Centrosome</location>
        <location evidence="5">Centriole</location>
    </subcellularLocation>
    <text evidence="5">Localizes to the centriole lumen.</text>
</comment>
<comment type="alternative products">
    <event type="alternative splicing"/>
    <isoform>
        <id>Q8TC05-1</id>
        <name>1</name>
        <sequence type="displayed"/>
    </isoform>
    <isoform>
        <id>Q8TC05-2</id>
        <name>2</name>
        <sequence type="described" ref="VSP_027546 VSP_027547"/>
    </isoform>
    <isoform>
        <id>Q8TC05-3</id>
        <name>3</name>
        <sequence type="described" ref="VSP_027544 VSP_027545"/>
    </isoform>
    <isoform>
        <id>Q8TC05-4</id>
        <name>4</name>
        <sequence type="described" ref="VSP_046400 VSP_046401"/>
    </isoform>
</comment>
<comment type="similarity">
    <text evidence="10">Belongs to the MDM1 family.</text>
</comment>
<dbReference type="EMBL" id="AF267851">
    <property type="protein sequence ID" value="AAF78952.1"/>
    <property type="molecule type" value="mRNA"/>
</dbReference>
<dbReference type="EMBL" id="AK297311">
    <property type="protein sequence ID" value="BAG59777.1"/>
    <property type="molecule type" value="mRNA"/>
</dbReference>
<dbReference type="EMBL" id="AC022511">
    <property type="status" value="NOT_ANNOTATED_CDS"/>
    <property type="molecule type" value="Genomic_DNA"/>
</dbReference>
<dbReference type="EMBL" id="BC022042">
    <property type="protein sequence ID" value="AAH22042.1"/>
    <property type="molecule type" value="mRNA"/>
</dbReference>
<dbReference type="EMBL" id="BC028355">
    <property type="protein sequence ID" value="AAH28355.1"/>
    <property type="molecule type" value="mRNA"/>
</dbReference>
<dbReference type="EMBL" id="AF007130">
    <property type="protein sequence ID" value="AAC19149.1"/>
    <property type="molecule type" value="mRNA"/>
</dbReference>
<dbReference type="CCDS" id="CCDS44938.1">
    <molecule id="Q8TC05-2"/>
</dbReference>
<dbReference type="CCDS" id="CCDS55841.1">
    <molecule id="Q8TC05-4"/>
</dbReference>
<dbReference type="CCDS" id="CCDS55842.1">
    <molecule id="Q8TC05-3"/>
</dbReference>
<dbReference type="CCDS" id="CCDS8983.1">
    <molecule id="Q8TC05-1"/>
</dbReference>
<dbReference type="RefSeq" id="NP_001191957.1">
    <molecule id="Q8TC05-4"/>
    <property type="nucleotide sequence ID" value="NM_001205028.3"/>
</dbReference>
<dbReference type="RefSeq" id="NP_001191958.1">
    <molecule id="Q8TC05-3"/>
    <property type="nucleotide sequence ID" value="NM_001205029.3"/>
</dbReference>
<dbReference type="RefSeq" id="NP_059136.2">
    <molecule id="Q8TC05-1"/>
    <property type="nucleotide sequence ID" value="NM_017440.6"/>
</dbReference>
<dbReference type="RefSeq" id="NP_064513.1">
    <molecule id="Q8TC05-2"/>
    <property type="nucleotide sequence ID" value="NM_020128.4"/>
</dbReference>
<dbReference type="BioGRID" id="121220">
    <property type="interactions" value="11"/>
</dbReference>
<dbReference type="FunCoup" id="Q8TC05">
    <property type="interactions" value="2436"/>
</dbReference>
<dbReference type="IntAct" id="Q8TC05">
    <property type="interactions" value="10"/>
</dbReference>
<dbReference type="STRING" id="9606.ENSP00000302537"/>
<dbReference type="iPTMnet" id="Q8TC05"/>
<dbReference type="PhosphoSitePlus" id="Q8TC05"/>
<dbReference type="BioMuta" id="MDM1"/>
<dbReference type="DMDM" id="156632525"/>
<dbReference type="jPOST" id="Q8TC05"/>
<dbReference type="MassIVE" id="Q8TC05"/>
<dbReference type="PaxDb" id="9606-ENSP00000302537"/>
<dbReference type="PeptideAtlas" id="Q8TC05"/>
<dbReference type="ProteomicsDB" id="17412"/>
<dbReference type="ProteomicsDB" id="74064">
    <molecule id="Q8TC05-1"/>
</dbReference>
<dbReference type="ProteomicsDB" id="74065">
    <molecule id="Q8TC05-2"/>
</dbReference>
<dbReference type="ProteomicsDB" id="74066">
    <molecule id="Q8TC05-3"/>
</dbReference>
<dbReference type="Antibodypedia" id="29303">
    <property type="antibodies" value="131 antibodies from 24 providers"/>
</dbReference>
<dbReference type="DNASU" id="56890"/>
<dbReference type="Ensembl" id="ENST00000303145.11">
    <molecule id="Q8TC05-1"/>
    <property type="protein sequence ID" value="ENSP00000302537.7"/>
    <property type="gene ID" value="ENSG00000111554.15"/>
</dbReference>
<dbReference type="Ensembl" id="ENST00000393543.7">
    <molecule id="Q8TC05-3"/>
    <property type="protein sequence ID" value="ENSP00000377175.3"/>
    <property type="gene ID" value="ENSG00000111554.15"/>
</dbReference>
<dbReference type="Ensembl" id="ENST00000411698.6">
    <molecule id="Q8TC05-4"/>
    <property type="protein sequence ID" value="ENSP00000391006.2"/>
    <property type="gene ID" value="ENSG00000111554.15"/>
</dbReference>
<dbReference type="Ensembl" id="ENST00000430606.3">
    <molecule id="Q8TC05-2"/>
    <property type="protein sequence ID" value="ENSP00000408694.2"/>
    <property type="gene ID" value="ENSG00000111554.15"/>
</dbReference>
<dbReference type="GeneID" id="56890"/>
<dbReference type="KEGG" id="hsa:56890"/>
<dbReference type="UCSC" id="uc001stz.3">
    <molecule id="Q8TC05-1"/>
    <property type="organism name" value="human"/>
</dbReference>
<dbReference type="AGR" id="HGNC:29917"/>
<dbReference type="CTD" id="56890"/>
<dbReference type="DisGeNET" id="56890"/>
<dbReference type="GeneCards" id="MDM1"/>
<dbReference type="HGNC" id="HGNC:29917">
    <property type="gene designation" value="MDM1"/>
</dbReference>
<dbReference type="HPA" id="ENSG00000111554">
    <property type="expression patterns" value="Low tissue specificity"/>
</dbReference>
<dbReference type="MIM" id="613813">
    <property type="type" value="gene"/>
</dbReference>
<dbReference type="neXtProt" id="NX_Q8TC05"/>
<dbReference type="OpenTargets" id="ENSG00000111554"/>
<dbReference type="PharmGKB" id="PA134879752"/>
<dbReference type="VEuPathDB" id="HostDB:ENSG00000111554"/>
<dbReference type="eggNOG" id="ENOG502QVRV">
    <property type="taxonomic scope" value="Eukaryota"/>
</dbReference>
<dbReference type="GeneTree" id="ENSGT00390000004106"/>
<dbReference type="HOGENOM" id="CLU_023835_0_0_1"/>
<dbReference type="InParanoid" id="Q8TC05"/>
<dbReference type="OMA" id="YQRQFAW"/>
<dbReference type="OrthoDB" id="9999940at2759"/>
<dbReference type="PAN-GO" id="Q8TC05">
    <property type="GO annotations" value="1 GO annotation based on evolutionary models"/>
</dbReference>
<dbReference type="PhylomeDB" id="Q8TC05"/>
<dbReference type="TreeFam" id="TF331015"/>
<dbReference type="PathwayCommons" id="Q8TC05"/>
<dbReference type="SignaLink" id="Q8TC05"/>
<dbReference type="BioGRID-ORCS" id="56890">
    <property type="hits" value="17 hits in 1161 CRISPR screens"/>
</dbReference>
<dbReference type="ChiTaRS" id="MDM1">
    <property type="organism name" value="human"/>
</dbReference>
<dbReference type="GenomeRNAi" id="56890"/>
<dbReference type="Pharos" id="Q8TC05">
    <property type="development level" value="Tbio"/>
</dbReference>
<dbReference type="PRO" id="PR:Q8TC05"/>
<dbReference type="Proteomes" id="UP000005640">
    <property type="component" value="Chromosome 12"/>
</dbReference>
<dbReference type="RNAct" id="Q8TC05">
    <property type="molecule type" value="protein"/>
</dbReference>
<dbReference type="Bgee" id="ENSG00000111554">
    <property type="expression patterns" value="Expressed in bronchial epithelial cell and 192 other cell types or tissues"/>
</dbReference>
<dbReference type="ExpressionAtlas" id="Q8TC05">
    <property type="expression patterns" value="baseline and differential"/>
</dbReference>
<dbReference type="GO" id="GO:0034451">
    <property type="term" value="C:centriolar satellite"/>
    <property type="evidence" value="ECO:0000314"/>
    <property type="project" value="HPA"/>
</dbReference>
<dbReference type="GO" id="GO:0005814">
    <property type="term" value="C:centriole"/>
    <property type="evidence" value="ECO:0000314"/>
    <property type="project" value="UniProtKB"/>
</dbReference>
<dbReference type="GO" id="GO:0005813">
    <property type="term" value="C:centrosome"/>
    <property type="evidence" value="ECO:0000314"/>
    <property type="project" value="UniProtKB"/>
</dbReference>
<dbReference type="GO" id="GO:0005829">
    <property type="term" value="C:cytosol"/>
    <property type="evidence" value="ECO:0000314"/>
    <property type="project" value="HPA"/>
</dbReference>
<dbReference type="GO" id="GO:0005874">
    <property type="term" value="C:microtubule"/>
    <property type="evidence" value="ECO:0007669"/>
    <property type="project" value="UniProtKB-KW"/>
</dbReference>
<dbReference type="GO" id="GO:0005634">
    <property type="term" value="C:nucleus"/>
    <property type="evidence" value="ECO:0000314"/>
    <property type="project" value="UniProtKB"/>
</dbReference>
<dbReference type="GO" id="GO:0008017">
    <property type="term" value="F:microtubule binding"/>
    <property type="evidence" value="ECO:0000315"/>
    <property type="project" value="UniProtKB"/>
</dbReference>
<dbReference type="GO" id="GO:0046600">
    <property type="term" value="P:negative regulation of centriole replication"/>
    <property type="evidence" value="ECO:0000315"/>
    <property type="project" value="UniProtKB"/>
</dbReference>
<dbReference type="GO" id="GO:0060041">
    <property type="term" value="P:retina development in camera-type eye"/>
    <property type="evidence" value="ECO:0000318"/>
    <property type="project" value="GO_Central"/>
</dbReference>
<dbReference type="InterPro" id="IPR029136">
    <property type="entry name" value="MDM1"/>
</dbReference>
<dbReference type="PANTHER" id="PTHR32078">
    <property type="entry name" value="NUCLEAR PROTEIN MDM1"/>
    <property type="match status" value="1"/>
</dbReference>
<dbReference type="PANTHER" id="PTHR32078:SF1">
    <property type="entry name" value="NUCLEAR PROTEIN MDM1"/>
    <property type="match status" value="1"/>
</dbReference>
<dbReference type="Pfam" id="PF15501">
    <property type="entry name" value="MDM1"/>
    <property type="match status" value="1"/>
</dbReference>
<sequence>MPVRFKGLSEYQRNFLWKKSYLSESCNSSVGRKYPWAGLRSDQLGITKEPSFISKRRVPYHDPQISKSLEWNGAISESNVVASPEPEAPETPKSQEAEQKDVTQERVHSLEASRVPKRTRSHSADSRAEGASDVENNEGVTNHTPVNENVELEHSTKVLSENVDNGLDRLLRKKAGLTVVPSYNALRNSEYQRQFVWKTSKETAPAFAANQVFHNKSQFVPPFKGNSVIHETEYKRNFKGLSPVKEPKLRNDLRENRNLETVSPERKSNKIDDRLKLEAEMELKDLHQPKRKLTPWKHQRLGKVNSEYRAKFLSPAQYLYKAGAWTHVKGNMPNQVKELREKAEFYRKRVQGTHFSRDHLNQILSDSNCCWDVSSTTSSEGTVSSNIRALDLAGDPTSHKTLQKCPSTEPEEKGNIVEEQPQKNTTEKLGVSAPTIPVRRRLAWDTENTSEDVQKQPGEKEEEDDNEEEGDRKTGKQAFMGEQEKLDVREKSKADKMKEGSDSSVSSEKGGRLPTPKLRELGGIQRTHHDLTTPAVGGAVLVSPSKMKPPAPEQRKRMTSQDCLETSKNDFTKKESRAVSLLTSPAAGIKTVDPLPLREDSEDNIHKFAEATLPVSKIPKYPTNPPGQLPSPPHVPSYWHPSRRIQGSLRDPEFQHNVGKARMNNLQLPQHEAFNDEDEDRLSEISARSAASSLRAFQTLARAKKRKENFWGKT</sequence>
<reference key="1">
    <citation type="submission" date="2000-05" db="EMBL/GenBank/DDBJ databases">
        <title>Cloning, mapping and characterization of a novel human MDM1 protein.</title>
        <authorList>
            <person name="Yang Q.S."/>
            <person name="Ying K."/>
            <person name="Wu H."/>
            <person name="Xia F."/>
            <person name="Xie Y."/>
            <person name="Mao Y.M."/>
        </authorList>
    </citation>
    <scope>NUCLEOTIDE SEQUENCE [MRNA] (ISOFORM 2)</scope>
</reference>
<reference key="2">
    <citation type="journal article" date="2004" name="Nat. Genet.">
        <title>Complete sequencing and characterization of 21,243 full-length human cDNAs.</title>
        <authorList>
            <person name="Ota T."/>
            <person name="Suzuki Y."/>
            <person name="Nishikawa T."/>
            <person name="Otsuki T."/>
            <person name="Sugiyama T."/>
            <person name="Irie R."/>
            <person name="Wakamatsu A."/>
            <person name="Hayashi K."/>
            <person name="Sato H."/>
            <person name="Nagai K."/>
            <person name="Kimura K."/>
            <person name="Makita H."/>
            <person name="Sekine M."/>
            <person name="Obayashi M."/>
            <person name="Nishi T."/>
            <person name="Shibahara T."/>
            <person name="Tanaka T."/>
            <person name="Ishii S."/>
            <person name="Yamamoto J."/>
            <person name="Saito K."/>
            <person name="Kawai Y."/>
            <person name="Isono Y."/>
            <person name="Nakamura Y."/>
            <person name="Nagahari K."/>
            <person name="Murakami K."/>
            <person name="Yasuda T."/>
            <person name="Iwayanagi T."/>
            <person name="Wagatsuma M."/>
            <person name="Shiratori A."/>
            <person name="Sudo H."/>
            <person name="Hosoiri T."/>
            <person name="Kaku Y."/>
            <person name="Kodaira H."/>
            <person name="Kondo H."/>
            <person name="Sugawara M."/>
            <person name="Takahashi M."/>
            <person name="Kanda K."/>
            <person name="Yokoi T."/>
            <person name="Furuya T."/>
            <person name="Kikkawa E."/>
            <person name="Omura Y."/>
            <person name="Abe K."/>
            <person name="Kamihara K."/>
            <person name="Katsuta N."/>
            <person name="Sato K."/>
            <person name="Tanikawa M."/>
            <person name="Yamazaki M."/>
            <person name="Ninomiya K."/>
            <person name="Ishibashi T."/>
            <person name="Yamashita H."/>
            <person name="Murakawa K."/>
            <person name="Fujimori K."/>
            <person name="Tanai H."/>
            <person name="Kimata M."/>
            <person name="Watanabe M."/>
            <person name="Hiraoka S."/>
            <person name="Chiba Y."/>
            <person name="Ishida S."/>
            <person name="Ono Y."/>
            <person name="Takiguchi S."/>
            <person name="Watanabe S."/>
            <person name="Yosida M."/>
            <person name="Hotuta T."/>
            <person name="Kusano J."/>
            <person name="Kanehori K."/>
            <person name="Takahashi-Fujii A."/>
            <person name="Hara H."/>
            <person name="Tanase T.-O."/>
            <person name="Nomura Y."/>
            <person name="Togiya S."/>
            <person name="Komai F."/>
            <person name="Hara R."/>
            <person name="Takeuchi K."/>
            <person name="Arita M."/>
            <person name="Imose N."/>
            <person name="Musashino K."/>
            <person name="Yuuki H."/>
            <person name="Oshima A."/>
            <person name="Sasaki N."/>
            <person name="Aotsuka S."/>
            <person name="Yoshikawa Y."/>
            <person name="Matsunawa H."/>
            <person name="Ichihara T."/>
            <person name="Shiohata N."/>
            <person name="Sano S."/>
            <person name="Moriya S."/>
            <person name="Momiyama H."/>
            <person name="Satoh N."/>
            <person name="Takami S."/>
            <person name="Terashima Y."/>
            <person name="Suzuki O."/>
            <person name="Nakagawa S."/>
            <person name="Senoh A."/>
            <person name="Mizoguchi H."/>
            <person name="Goto Y."/>
            <person name="Shimizu F."/>
            <person name="Wakebe H."/>
            <person name="Hishigaki H."/>
            <person name="Watanabe T."/>
            <person name="Sugiyama A."/>
            <person name="Takemoto M."/>
            <person name="Kawakami B."/>
            <person name="Yamazaki M."/>
            <person name="Watanabe K."/>
            <person name="Kumagai A."/>
            <person name="Itakura S."/>
            <person name="Fukuzumi Y."/>
            <person name="Fujimori Y."/>
            <person name="Komiyama M."/>
            <person name="Tashiro H."/>
            <person name="Tanigami A."/>
            <person name="Fujiwara T."/>
            <person name="Ono T."/>
            <person name="Yamada K."/>
            <person name="Fujii Y."/>
            <person name="Ozaki K."/>
            <person name="Hirao M."/>
            <person name="Ohmori Y."/>
            <person name="Kawabata A."/>
            <person name="Hikiji T."/>
            <person name="Kobatake N."/>
            <person name="Inagaki H."/>
            <person name="Ikema Y."/>
            <person name="Okamoto S."/>
            <person name="Okitani R."/>
            <person name="Kawakami T."/>
            <person name="Noguchi S."/>
            <person name="Itoh T."/>
            <person name="Shigeta K."/>
            <person name="Senba T."/>
            <person name="Matsumura K."/>
            <person name="Nakajima Y."/>
            <person name="Mizuno T."/>
            <person name="Morinaga M."/>
            <person name="Sasaki M."/>
            <person name="Togashi T."/>
            <person name="Oyama M."/>
            <person name="Hata H."/>
            <person name="Watanabe M."/>
            <person name="Komatsu T."/>
            <person name="Mizushima-Sugano J."/>
            <person name="Satoh T."/>
            <person name="Shirai Y."/>
            <person name="Takahashi Y."/>
            <person name="Nakagawa K."/>
            <person name="Okumura K."/>
            <person name="Nagase T."/>
            <person name="Nomura N."/>
            <person name="Kikuchi H."/>
            <person name="Masuho Y."/>
            <person name="Yamashita R."/>
            <person name="Nakai K."/>
            <person name="Yada T."/>
            <person name="Nakamura Y."/>
            <person name="Ohara O."/>
            <person name="Isogai T."/>
            <person name="Sugano S."/>
        </authorList>
    </citation>
    <scope>NUCLEOTIDE SEQUENCE [LARGE SCALE MRNA] (ISOFORM 4)</scope>
    <source>
        <tissue>Brain</tissue>
    </source>
</reference>
<reference key="3">
    <citation type="journal article" date="2006" name="Nature">
        <title>The finished DNA sequence of human chromosome 12.</title>
        <authorList>
            <person name="Scherer S.E."/>
            <person name="Muzny D.M."/>
            <person name="Buhay C.J."/>
            <person name="Chen R."/>
            <person name="Cree A."/>
            <person name="Ding Y."/>
            <person name="Dugan-Rocha S."/>
            <person name="Gill R."/>
            <person name="Gunaratne P."/>
            <person name="Harris R.A."/>
            <person name="Hawes A.C."/>
            <person name="Hernandez J."/>
            <person name="Hodgson A.V."/>
            <person name="Hume J."/>
            <person name="Jackson A."/>
            <person name="Khan Z.M."/>
            <person name="Kovar-Smith C."/>
            <person name="Lewis L.R."/>
            <person name="Lozado R.J."/>
            <person name="Metzker M.L."/>
            <person name="Milosavljevic A."/>
            <person name="Miner G.R."/>
            <person name="Montgomery K.T."/>
            <person name="Morgan M.B."/>
            <person name="Nazareth L.V."/>
            <person name="Scott G."/>
            <person name="Sodergren E."/>
            <person name="Song X.-Z."/>
            <person name="Steffen D."/>
            <person name="Lovering R.C."/>
            <person name="Wheeler D.A."/>
            <person name="Worley K.C."/>
            <person name="Yuan Y."/>
            <person name="Zhang Z."/>
            <person name="Adams C.Q."/>
            <person name="Ansari-Lari M.A."/>
            <person name="Ayele M."/>
            <person name="Brown M.J."/>
            <person name="Chen G."/>
            <person name="Chen Z."/>
            <person name="Clerc-Blankenburg K.P."/>
            <person name="Davis C."/>
            <person name="Delgado O."/>
            <person name="Dinh H.H."/>
            <person name="Draper H."/>
            <person name="Gonzalez-Garay M.L."/>
            <person name="Havlak P."/>
            <person name="Jackson L.R."/>
            <person name="Jacob L.S."/>
            <person name="Kelly S.H."/>
            <person name="Li L."/>
            <person name="Li Z."/>
            <person name="Liu J."/>
            <person name="Liu W."/>
            <person name="Lu J."/>
            <person name="Maheshwari M."/>
            <person name="Nguyen B.-V."/>
            <person name="Okwuonu G.O."/>
            <person name="Pasternak S."/>
            <person name="Perez L.M."/>
            <person name="Plopper F.J.H."/>
            <person name="Santibanez J."/>
            <person name="Shen H."/>
            <person name="Tabor P.E."/>
            <person name="Verduzco D."/>
            <person name="Waldron L."/>
            <person name="Wang Q."/>
            <person name="Williams G.A."/>
            <person name="Zhang J."/>
            <person name="Zhou J."/>
            <person name="Allen C.C."/>
            <person name="Amin A.G."/>
            <person name="Anyalebechi V."/>
            <person name="Bailey M."/>
            <person name="Barbaria J.A."/>
            <person name="Bimage K.E."/>
            <person name="Bryant N.P."/>
            <person name="Burch P.E."/>
            <person name="Burkett C.E."/>
            <person name="Burrell K.L."/>
            <person name="Calderon E."/>
            <person name="Cardenas V."/>
            <person name="Carter K."/>
            <person name="Casias K."/>
            <person name="Cavazos I."/>
            <person name="Cavazos S.R."/>
            <person name="Ceasar H."/>
            <person name="Chacko J."/>
            <person name="Chan S.N."/>
            <person name="Chavez D."/>
            <person name="Christopoulos C."/>
            <person name="Chu J."/>
            <person name="Cockrell R."/>
            <person name="Cox C.D."/>
            <person name="Dang M."/>
            <person name="Dathorne S.R."/>
            <person name="David R."/>
            <person name="Davis C.M."/>
            <person name="Davy-Carroll L."/>
            <person name="Deshazo D.R."/>
            <person name="Donlin J.E."/>
            <person name="D'Souza L."/>
            <person name="Eaves K.A."/>
            <person name="Egan A."/>
            <person name="Emery-Cohen A.J."/>
            <person name="Escotto M."/>
            <person name="Flagg N."/>
            <person name="Forbes L.D."/>
            <person name="Gabisi A.M."/>
            <person name="Garza M."/>
            <person name="Hamilton C."/>
            <person name="Henderson N."/>
            <person name="Hernandez O."/>
            <person name="Hines S."/>
            <person name="Hogues M.E."/>
            <person name="Huang M."/>
            <person name="Idlebird D.G."/>
            <person name="Johnson R."/>
            <person name="Jolivet A."/>
            <person name="Jones S."/>
            <person name="Kagan R."/>
            <person name="King L.M."/>
            <person name="Leal B."/>
            <person name="Lebow H."/>
            <person name="Lee S."/>
            <person name="LeVan J.M."/>
            <person name="Lewis L.C."/>
            <person name="London P."/>
            <person name="Lorensuhewa L.M."/>
            <person name="Loulseged H."/>
            <person name="Lovett D.A."/>
            <person name="Lucier A."/>
            <person name="Lucier R.L."/>
            <person name="Ma J."/>
            <person name="Madu R.C."/>
            <person name="Mapua P."/>
            <person name="Martindale A.D."/>
            <person name="Martinez E."/>
            <person name="Massey E."/>
            <person name="Mawhiney S."/>
            <person name="Meador M.G."/>
            <person name="Mendez S."/>
            <person name="Mercado C."/>
            <person name="Mercado I.C."/>
            <person name="Merritt C.E."/>
            <person name="Miner Z.L."/>
            <person name="Minja E."/>
            <person name="Mitchell T."/>
            <person name="Mohabbat F."/>
            <person name="Mohabbat K."/>
            <person name="Montgomery B."/>
            <person name="Moore N."/>
            <person name="Morris S."/>
            <person name="Munidasa M."/>
            <person name="Ngo R.N."/>
            <person name="Nguyen N.B."/>
            <person name="Nickerson E."/>
            <person name="Nwaokelemeh O.O."/>
            <person name="Nwokenkwo S."/>
            <person name="Obregon M."/>
            <person name="Oguh M."/>
            <person name="Oragunye N."/>
            <person name="Oviedo R.J."/>
            <person name="Parish B.J."/>
            <person name="Parker D.N."/>
            <person name="Parrish J."/>
            <person name="Parks K.L."/>
            <person name="Paul H.A."/>
            <person name="Payton B.A."/>
            <person name="Perez A."/>
            <person name="Perrin W."/>
            <person name="Pickens A."/>
            <person name="Primus E.L."/>
            <person name="Pu L.-L."/>
            <person name="Puazo M."/>
            <person name="Quiles M.M."/>
            <person name="Quiroz J.B."/>
            <person name="Rabata D."/>
            <person name="Reeves K."/>
            <person name="Ruiz S.J."/>
            <person name="Shao H."/>
            <person name="Sisson I."/>
            <person name="Sonaike T."/>
            <person name="Sorelle R.P."/>
            <person name="Sutton A.E."/>
            <person name="Svatek A.F."/>
            <person name="Svetz L.A."/>
            <person name="Tamerisa K.S."/>
            <person name="Taylor T.R."/>
            <person name="Teague B."/>
            <person name="Thomas N."/>
            <person name="Thorn R.D."/>
            <person name="Trejos Z.Y."/>
            <person name="Trevino B.K."/>
            <person name="Ukegbu O.N."/>
            <person name="Urban J.B."/>
            <person name="Vasquez L.I."/>
            <person name="Vera V.A."/>
            <person name="Villasana D.M."/>
            <person name="Wang L."/>
            <person name="Ward-Moore S."/>
            <person name="Warren J.T."/>
            <person name="Wei X."/>
            <person name="White F."/>
            <person name="Williamson A.L."/>
            <person name="Wleczyk R."/>
            <person name="Wooden H.S."/>
            <person name="Wooden S.H."/>
            <person name="Yen J."/>
            <person name="Yoon L."/>
            <person name="Yoon V."/>
            <person name="Zorrilla S.E."/>
            <person name="Nelson D."/>
            <person name="Kucherlapati R."/>
            <person name="Weinstock G."/>
            <person name="Gibbs R.A."/>
        </authorList>
    </citation>
    <scope>NUCLEOTIDE SEQUENCE [LARGE SCALE GENOMIC DNA]</scope>
</reference>
<reference key="4">
    <citation type="journal article" date="2004" name="Genome Res.">
        <title>The status, quality, and expansion of the NIH full-length cDNA project: the Mammalian Gene Collection (MGC).</title>
        <authorList>
            <consortium name="The MGC Project Team"/>
        </authorList>
    </citation>
    <scope>NUCLEOTIDE SEQUENCE [LARGE SCALE MRNA] (ISOFORMS 1 AND 3)</scope>
    <scope>VARIANTS ILE-103; HIS-489 AND LEU-552</scope>
    <source>
        <tissue>Prostate</tissue>
        <tissue>Testis</tissue>
    </source>
</reference>
<reference key="5">
    <citation type="submission" date="1997-06" db="EMBL/GenBank/DDBJ databases">
        <authorList>
            <person name="Yu W."/>
            <person name="Sarginson J."/>
            <person name="Gibbs R.A."/>
        </authorList>
    </citation>
    <scope>NUCLEOTIDE SEQUENCE [LARGE SCALE MRNA] OF 462-714 (ISOFORM 1)</scope>
    <scope>VARIANT HIS-489</scope>
    <source>
        <tissue>Brain</tissue>
    </source>
</reference>
<reference key="6">
    <citation type="journal article" date="2003" name="Nature">
        <title>Proteomic characterization of the human centrosome by protein correlation profiling.</title>
        <authorList>
            <person name="Andersen J.S."/>
            <person name="Wilkinson C.J."/>
            <person name="Mayor T."/>
            <person name="Mortensen P."/>
            <person name="Nigg E.A."/>
            <person name="Mann M."/>
        </authorList>
    </citation>
    <scope>IDENTIFICATION BY MASS SPECTROMETRY</scope>
    <scope>SUBCELLULAR LOCATION [LARGE SCALE ANALYSIS]</scope>
    <source>
        <tissue>Lymphoblast</tissue>
    </source>
</reference>
<reference key="7">
    <citation type="journal article" date="2013" name="J. Proteome Res.">
        <title>Toward a comprehensive characterization of a human cancer cell phosphoproteome.</title>
        <authorList>
            <person name="Zhou H."/>
            <person name="Di Palma S."/>
            <person name="Preisinger C."/>
            <person name="Peng M."/>
            <person name="Polat A.N."/>
            <person name="Heck A.J."/>
            <person name="Mohammed S."/>
        </authorList>
    </citation>
    <scope>PHOSPHORYLATION [LARGE SCALE ANALYSIS] AT SER-242; SER-263; SER-584 AND SER-648</scope>
    <scope>IDENTIFICATION BY MASS SPECTROMETRY [LARGE SCALE ANALYSIS]</scope>
    <source>
        <tissue>Cervix carcinoma</tissue>
        <tissue>Erythroleukemia</tissue>
    </source>
</reference>
<reference key="8">
    <citation type="journal article" date="2014" name="J. Proteomics">
        <title>An enzyme assisted RP-RPLC approach for in-depth analysis of human liver phosphoproteome.</title>
        <authorList>
            <person name="Bian Y."/>
            <person name="Song C."/>
            <person name="Cheng K."/>
            <person name="Dong M."/>
            <person name="Wang F."/>
            <person name="Huang J."/>
            <person name="Sun D."/>
            <person name="Wang L."/>
            <person name="Ye M."/>
            <person name="Zou H."/>
        </authorList>
    </citation>
    <scope>PHOSPHORYLATION [LARGE SCALE ANALYSIS] AT SER-83</scope>
    <scope>IDENTIFICATION BY MASS SPECTROMETRY [LARGE SCALE ANALYSIS]</scope>
    <source>
        <tissue>Liver</tissue>
    </source>
</reference>
<reference key="9">
    <citation type="journal article" date="2015" name="Mol. Biol. Cell">
        <title>MDM1 is a microtubule-binding protein that negatively regulates centriole duplication.</title>
        <authorList>
            <person name="Van de Mark D."/>
            <person name="Kong D."/>
            <person name="Loncarek J."/>
            <person name="Stearns T."/>
        </authorList>
    </citation>
    <scope>FUNCTION</scope>
    <scope>SUBCELLULAR LOCATION</scope>
    <scope>DOMAIN [ST]-E-Y-X(3)-F MOTIF</scope>
    <scope>MUTAGENESIS OF 9-SER--PHE-15; 189-SER--PHE-195; 232-THR--PHE-238 AND 306-SER--PHE-312</scope>
</reference>
<protein>
    <recommendedName>
        <fullName>Nuclear protein MDM1</fullName>
    </recommendedName>
</protein>
<keyword id="KW-0025">Alternative splicing</keyword>
<keyword id="KW-0963">Cytoplasm</keyword>
<keyword id="KW-0206">Cytoskeleton</keyword>
<keyword id="KW-0493">Microtubule</keyword>
<keyword id="KW-0539">Nucleus</keyword>
<keyword id="KW-0597">Phosphoprotein</keyword>
<keyword id="KW-1267">Proteomics identification</keyword>
<keyword id="KW-1185">Reference proteome</keyword>